<gene>
    <name type="primary">VLTF3</name>
    <name type="ordered locus">FPV165</name>
</gene>
<feature type="chain" id="PRO_0000099179" description="Viral late gene transcription factor 3">
    <location>
        <begin position="1"/>
        <end position="225"/>
    </location>
</feature>
<feature type="zinc finger region" evidence="1">
    <location>
        <begin position="7"/>
        <end position="27"/>
    </location>
</feature>
<reference key="1">
    <citation type="journal article" date="2000" name="J. Virol.">
        <title>The genome of fowlpox virus.</title>
        <authorList>
            <person name="Afonso C.L."/>
            <person name="Tulman E.R."/>
            <person name="Lu Z."/>
            <person name="Zsak L."/>
            <person name="Kutish G.F."/>
            <person name="Rock D.L."/>
        </authorList>
    </citation>
    <scope>NUCLEOTIDE SEQUENCE [LARGE SCALE GENOMIC DNA]</scope>
</reference>
<accession>Q9J566</accession>
<name>VLTF3_FOWPN</name>
<proteinExistence type="evidence at transcript level"/>
<comment type="function">
    <text>Acts with RNA polymerase to initiate transcription from late gene promoters.</text>
</comment>
<comment type="subunit">
    <text evidence="1">Interacts with the late transcription elongation factor H5/VLTF-4. Interacts with the late transcription factors VLTF-1 (By similarity).</text>
</comment>
<comment type="developmental stage">
    <text>Intermediate stages of infection.</text>
</comment>
<comment type="similarity">
    <text evidence="2">Belongs to the nucleo-cytoplasmic large DNA viruses (NCLDVs) VLTF-3 family.</text>
</comment>
<sequence length="225" mass="26226">MSNLKHCSNCKHNGLITESNHEFCIFCQSIFQLSNKVSKKSNFHVSNKLIHLRNVLRRLLSNQCSSDVIVELKSVMTKNNISSTDIDANFVSSFLKANEKINKKDYKLVFEIINHIKEEKLNLDTSKINEVIEIFKHLVFFCQENTPSKTINYSFFLDKIFSLTSVTNNLKPQTVKNYTKNNSNQLVWENFLDYMKKKKINTSVYDYGHEYVFVDYGFTTCSLEV</sequence>
<evidence type="ECO:0000250" key="1"/>
<evidence type="ECO:0000305" key="2"/>
<protein>
    <recommendedName>
        <fullName>Viral late gene transcription factor 3</fullName>
        <shortName>VLTF-3</shortName>
    </recommendedName>
</protein>
<organism>
    <name type="scientific">Fowlpox virus (strain NVSL)</name>
    <name type="common">FPV</name>
    <dbReference type="NCBI Taxonomy" id="928301"/>
    <lineage>
        <taxon>Viruses</taxon>
        <taxon>Varidnaviria</taxon>
        <taxon>Bamfordvirae</taxon>
        <taxon>Nucleocytoviricota</taxon>
        <taxon>Pokkesviricetes</taxon>
        <taxon>Chitovirales</taxon>
        <taxon>Poxviridae</taxon>
        <taxon>Chordopoxvirinae</taxon>
        <taxon>Avipoxvirus</taxon>
        <taxon>Fowlpox virus</taxon>
    </lineage>
</organism>
<dbReference type="EMBL" id="AF198100">
    <property type="protein sequence ID" value="AAF44509.1"/>
    <property type="molecule type" value="Genomic_DNA"/>
</dbReference>
<dbReference type="RefSeq" id="NP_039128.1">
    <property type="nucleotide sequence ID" value="NC_002188.1"/>
</dbReference>
<dbReference type="GeneID" id="1486713"/>
<dbReference type="KEGG" id="vg:1486713"/>
<dbReference type="Proteomes" id="UP000008597">
    <property type="component" value="Segment"/>
</dbReference>
<dbReference type="GO" id="GO:0008270">
    <property type="term" value="F:zinc ion binding"/>
    <property type="evidence" value="ECO:0007669"/>
    <property type="project" value="UniProtKB-KW"/>
</dbReference>
<dbReference type="GO" id="GO:0046782">
    <property type="term" value="P:regulation of viral transcription"/>
    <property type="evidence" value="ECO:0007669"/>
    <property type="project" value="InterPro"/>
</dbReference>
<dbReference type="InterPro" id="IPR007031">
    <property type="entry name" value="Poxvirus_VLTF3"/>
</dbReference>
<dbReference type="InterPro" id="IPR014900">
    <property type="entry name" value="VLTF-3_Zn_ribbon"/>
</dbReference>
<dbReference type="Pfam" id="PF08792">
    <property type="entry name" value="A2L_zn_ribbon"/>
    <property type="match status" value="1"/>
</dbReference>
<dbReference type="Pfam" id="PF04947">
    <property type="entry name" value="Pox_VLTF3"/>
    <property type="match status" value="1"/>
</dbReference>
<keyword id="KW-0010">Activator</keyword>
<keyword id="KW-0426">Late protein</keyword>
<keyword id="KW-0479">Metal-binding</keyword>
<keyword id="KW-1185">Reference proteome</keyword>
<keyword id="KW-0804">Transcription</keyword>
<keyword id="KW-0805">Transcription regulation</keyword>
<keyword id="KW-0862">Zinc</keyword>
<keyword id="KW-0863">Zinc-finger</keyword>
<organismHost>
    <name type="scientific">Vertebrata</name>
    <dbReference type="NCBI Taxonomy" id="7742"/>
</organismHost>